<reference key="1">
    <citation type="journal article" date="1999" name="Nature">
        <title>Sequence and analysis of chromosome 2 of the plant Arabidopsis thaliana.</title>
        <authorList>
            <person name="Lin X."/>
            <person name="Kaul S."/>
            <person name="Rounsley S.D."/>
            <person name="Shea T.P."/>
            <person name="Benito M.-I."/>
            <person name="Town C.D."/>
            <person name="Fujii C.Y."/>
            <person name="Mason T.M."/>
            <person name="Bowman C.L."/>
            <person name="Barnstead M.E."/>
            <person name="Feldblyum T.V."/>
            <person name="Buell C.R."/>
            <person name="Ketchum K.A."/>
            <person name="Lee J.J."/>
            <person name="Ronning C.M."/>
            <person name="Koo H.L."/>
            <person name="Moffat K.S."/>
            <person name="Cronin L.A."/>
            <person name="Shen M."/>
            <person name="Pai G."/>
            <person name="Van Aken S."/>
            <person name="Umayam L."/>
            <person name="Tallon L.J."/>
            <person name="Gill J.E."/>
            <person name="Adams M.D."/>
            <person name="Carrera A.J."/>
            <person name="Creasy T.H."/>
            <person name="Goodman H.M."/>
            <person name="Somerville C.R."/>
            <person name="Copenhaver G.P."/>
            <person name="Preuss D."/>
            <person name="Nierman W.C."/>
            <person name="White O."/>
            <person name="Eisen J.A."/>
            <person name="Salzberg S.L."/>
            <person name="Fraser C.M."/>
            <person name="Venter J.C."/>
        </authorList>
    </citation>
    <scope>NUCLEOTIDE SEQUENCE [LARGE SCALE GENOMIC DNA]</scope>
    <source>
        <strain>cv. Columbia</strain>
    </source>
</reference>
<reference key="2">
    <citation type="journal article" date="2017" name="Plant J.">
        <title>Araport11: a complete reannotation of the Arabidopsis thaliana reference genome.</title>
        <authorList>
            <person name="Cheng C.Y."/>
            <person name="Krishnakumar V."/>
            <person name="Chan A.P."/>
            <person name="Thibaud-Nissen F."/>
            <person name="Schobel S."/>
            <person name="Town C.D."/>
        </authorList>
    </citation>
    <scope>GENOME REANNOTATION</scope>
    <source>
        <strain>cv. Columbia</strain>
    </source>
</reference>
<reference key="3">
    <citation type="journal article" date="1996" name="Genetics">
        <title>Structure and evolution of the actin gene family in Arabidopsis thaliana.</title>
        <authorList>
            <person name="McDowell J.M."/>
            <person name="Huang S."/>
            <person name="McKinney E.C."/>
            <person name="An Y.-Q."/>
            <person name="Meagher R.B."/>
        </authorList>
    </citation>
    <scope>GENE FAMILY ORGANIZATION</scope>
    <source>
        <strain>cv. Columbia</strain>
    </source>
</reference>
<gene>
    <name type="primary">ACT9</name>
    <name type="ordered locus">At2g42090</name>
    <name type="ORF">T6D20.2</name>
</gene>
<dbReference type="EMBL" id="U90439">
    <property type="protein sequence ID" value="AAB63535.1"/>
    <property type="molecule type" value="Genomic_DNA"/>
</dbReference>
<dbReference type="EMBL" id="CP002685">
    <property type="protein sequence ID" value="AEC10069.1"/>
    <property type="molecule type" value="Genomic_DNA"/>
</dbReference>
<dbReference type="PIR" id="G84849">
    <property type="entry name" value="G84849"/>
</dbReference>
<dbReference type="RefSeq" id="NP_181739.1">
    <property type="nucleotide sequence ID" value="NM_129772.1"/>
</dbReference>
<dbReference type="SMR" id="P93738"/>
<dbReference type="FunCoup" id="P93738">
    <property type="interactions" value="1"/>
</dbReference>
<dbReference type="STRING" id="3702.P93738"/>
<dbReference type="PaxDb" id="3702-AT2G42090.1"/>
<dbReference type="ProteomicsDB" id="244761"/>
<dbReference type="EnsemblPlants" id="AT2G42090.1">
    <property type="protein sequence ID" value="AT2G42090.1"/>
    <property type="gene ID" value="AT2G42090"/>
</dbReference>
<dbReference type="GeneID" id="818809"/>
<dbReference type="Gramene" id="AT2G42090.1">
    <property type="protein sequence ID" value="AT2G42090.1"/>
    <property type="gene ID" value="AT2G42090"/>
</dbReference>
<dbReference type="KEGG" id="ath:AT2G42090"/>
<dbReference type="Araport" id="AT2G42090"/>
<dbReference type="TAIR" id="AT2G42090">
    <property type="gene designation" value="ACT9"/>
</dbReference>
<dbReference type="eggNOG" id="KOG0676">
    <property type="taxonomic scope" value="Eukaryota"/>
</dbReference>
<dbReference type="HOGENOM" id="CLU_027965_0_2_1"/>
<dbReference type="InParanoid" id="P93738"/>
<dbReference type="OMA" id="MKPIVCD"/>
<dbReference type="PhylomeDB" id="P93738"/>
<dbReference type="Proteomes" id="UP000006548">
    <property type="component" value="Chromosome 2"/>
</dbReference>
<dbReference type="ExpressionAtlas" id="P93738">
    <property type="expression patterns" value="baseline and differential"/>
</dbReference>
<dbReference type="GO" id="GO:0005737">
    <property type="term" value="C:cytoplasm"/>
    <property type="evidence" value="ECO:0007669"/>
    <property type="project" value="UniProtKB-KW"/>
</dbReference>
<dbReference type="GO" id="GO:0005856">
    <property type="term" value="C:cytoskeleton"/>
    <property type="evidence" value="ECO:0007669"/>
    <property type="project" value="UniProtKB-SubCell"/>
</dbReference>
<dbReference type="GO" id="GO:0005524">
    <property type="term" value="F:ATP binding"/>
    <property type="evidence" value="ECO:0007669"/>
    <property type="project" value="UniProtKB-KW"/>
</dbReference>
<dbReference type="FunFam" id="3.30.420.40:FF:000148">
    <property type="entry name" value="Actin, alpha skeletal muscle"/>
    <property type="match status" value="1"/>
</dbReference>
<dbReference type="FunFam" id="3.90.640.10:FF:000047">
    <property type="entry name" value="Actin, alpha skeletal muscle"/>
    <property type="match status" value="1"/>
</dbReference>
<dbReference type="FunFam" id="3.30.420.40:FF:000058">
    <property type="entry name" value="Putative actin-related protein 5"/>
    <property type="match status" value="1"/>
</dbReference>
<dbReference type="Gene3D" id="3.30.420.40">
    <property type="match status" value="2"/>
</dbReference>
<dbReference type="Gene3D" id="3.90.640.10">
    <property type="entry name" value="Actin, Chain A, domain 4"/>
    <property type="match status" value="1"/>
</dbReference>
<dbReference type="InterPro" id="IPR004000">
    <property type="entry name" value="Actin"/>
</dbReference>
<dbReference type="InterPro" id="IPR020902">
    <property type="entry name" value="Actin/actin-like_CS"/>
</dbReference>
<dbReference type="InterPro" id="IPR004001">
    <property type="entry name" value="Actin_CS"/>
</dbReference>
<dbReference type="InterPro" id="IPR043129">
    <property type="entry name" value="ATPase_NBD"/>
</dbReference>
<dbReference type="PANTHER" id="PTHR11937">
    <property type="entry name" value="ACTIN"/>
    <property type="match status" value="1"/>
</dbReference>
<dbReference type="Pfam" id="PF00022">
    <property type="entry name" value="Actin"/>
    <property type="match status" value="1"/>
</dbReference>
<dbReference type="PRINTS" id="PR00190">
    <property type="entry name" value="ACTIN"/>
</dbReference>
<dbReference type="SMART" id="SM00268">
    <property type="entry name" value="ACTIN"/>
    <property type="match status" value="1"/>
</dbReference>
<dbReference type="SUPFAM" id="SSF53067">
    <property type="entry name" value="Actin-like ATPase domain"/>
    <property type="match status" value="2"/>
</dbReference>
<dbReference type="PROSITE" id="PS00432">
    <property type="entry name" value="ACTINS_2"/>
    <property type="match status" value="1"/>
</dbReference>
<dbReference type="PROSITE" id="PS01132">
    <property type="entry name" value="ACTINS_ACT_LIKE"/>
    <property type="match status" value="1"/>
</dbReference>
<comment type="function">
    <text>Actins are highly conserved proteins that are involved in various types of cell motility and are ubiquitously expressed in all eukaryotic cells. Essential component of cell cytoskeleton; plays an important role in cytoplasmic streaming, cell shape determination, cell division, organelle movement and extension growth.</text>
</comment>
<comment type="subunit">
    <text>Polymerization of globular actin (G-actin) leads to a structural filament (F-actin) in the form of a two-stranded helix. The binding of profilin to monomeric G-actin cause the sequestration of actin into profilactin complexes, and prevents the polymerization.</text>
</comment>
<comment type="subcellular location">
    <subcellularLocation>
        <location>Cytoplasm</location>
        <location>Cytoskeleton</location>
    </subcellularLocation>
</comment>
<comment type="miscellaneous">
    <text>There are 8 actin genes in A.thaliana.</text>
</comment>
<comment type="similarity">
    <text evidence="1">Belongs to the actin family.</text>
</comment>
<comment type="caution">
    <text evidence="1">Could be the product of a pseudogene.</text>
</comment>
<evidence type="ECO:0000305" key="1"/>
<feature type="chain" id="PRO_0000088894" description="Putative actin-9">
    <location>
        <begin position="1"/>
        <end position="366"/>
    </location>
</feature>
<accession>P93738</accession>
<name>ACT9_ARATH</name>
<keyword id="KW-0067">ATP-binding</keyword>
<keyword id="KW-0963">Cytoplasm</keyword>
<keyword id="KW-0206">Cytoskeleton</keyword>
<keyword id="KW-0547">Nucleotide-binding</keyword>
<keyword id="KW-1185">Reference proteome</keyword>
<proteinExistence type="uncertain"/>
<protein>
    <recommendedName>
        <fullName>Putative actin-9</fullName>
    </recommendedName>
</protein>
<sequence length="366" mass="41422">MKPIVCDKGHGMVQAGFAGDEAPKVVFPCVVGRPRDGLNPNESYVGEEGHANRDILTLKDPMEHGIVNNWDDMEKIWHYTFYNELRVDPEEHPVLLTEAPYNPKANREKMTQIMFESFDVPAMYVSMQSVLYLYSSGRTTGVVLDLGERVSHTVPVYEGYALPHGILRLDLGGRDLTDYLIEIMTERGYTYTTSAEREIVRDIKEKLCYVALDYEQEMEKTTKGWTIDKTYVLPDGQEITIEAERFMCPEVLFQPSVIGKESSGIHEATRNSILKCPVDTRRDMYGNILMTGGTTMLHGIKERMTKELNALVPSSMKVKVVVPPESECSVWIGGSILASLSTFHQMWITKDEYEEHGAAIVHRKCV</sequence>
<organism>
    <name type="scientific">Arabidopsis thaliana</name>
    <name type="common">Mouse-ear cress</name>
    <dbReference type="NCBI Taxonomy" id="3702"/>
    <lineage>
        <taxon>Eukaryota</taxon>
        <taxon>Viridiplantae</taxon>
        <taxon>Streptophyta</taxon>
        <taxon>Embryophyta</taxon>
        <taxon>Tracheophyta</taxon>
        <taxon>Spermatophyta</taxon>
        <taxon>Magnoliopsida</taxon>
        <taxon>eudicotyledons</taxon>
        <taxon>Gunneridae</taxon>
        <taxon>Pentapetalae</taxon>
        <taxon>rosids</taxon>
        <taxon>malvids</taxon>
        <taxon>Brassicales</taxon>
        <taxon>Brassicaceae</taxon>
        <taxon>Camelineae</taxon>
        <taxon>Arabidopsis</taxon>
    </lineage>
</organism>